<accession>O64903</accession>
<accession>O65212</accession>
<accession>Q9SMX6</accession>
<organism>
    <name type="scientific">Arabidopsis thaliana</name>
    <name type="common">Mouse-ear cress</name>
    <dbReference type="NCBI Taxonomy" id="3702"/>
    <lineage>
        <taxon>Eukaryota</taxon>
        <taxon>Viridiplantae</taxon>
        <taxon>Streptophyta</taxon>
        <taxon>Embryophyta</taxon>
        <taxon>Tracheophyta</taxon>
        <taxon>Spermatophyta</taxon>
        <taxon>Magnoliopsida</taxon>
        <taxon>eudicotyledons</taxon>
        <taxon>Gunneridae</taxon>
        <taxon>Pentapetalae</taxon>
        <taxon>rosids</taxon>
        <taxon>malvids</taxon>
        <taxon>Brassicales</taxon>
        <taxon>Brassicaceae</taxon>
        <taxon>Camelineae</taxon>
        <taxon>Arabidopsis</taxon>
    </lineage>
</organism>
<proteinExistence type="evidence at protein level"/>
<gene>
    <name type="primary">NDPK2</name>
    <name type="ordered locus">At5g63310</name>
    <name type="ORF">MDC12.28</name>
</gene>
<evidence type="ECO:0000250" key="1"/>
<evidence type="ECO:0000255" key="2"/>
<evidence type="ECO:0000269" key="3">
    <source>
    </source>
</evidence>
<evidence type="ECO:0000269" key="4">
    <source>
    </source>
</evidence>
<evidence type="ECO:0000269" key="5">
    <source>
    </source>
</evidence>
<evidence type="ECO:0000305" key="6"/>
<evidence type="ECO:0007829" key="7">
    <source>
        <dbReference type="PDB" id="1S57"/>
    </source>
</evidence>
<evidence type="ECO:0007829" key="8">
    <source>
        <dbReference type="PDB" id="1S59"/>
    </source>
</evidence>
<sequence>MVGATVVSKWTPLCVASPPERNSASLNPHCSPARVNFRTALAAFRPQFRLFSRNSASRRRLRASSSAESGIFLPHLVASMEDVEETYIMVKPDGIQRGLVGEIISRFEKKGFKLIGLKMFQCPKELAEEHYKDLSAKSFFPNLIEYITSGPVVCMAWEGVGVVASARKLIGKTDPLQAEPGTIRGDLAVQTGRNIVHGSDSPENGKREIGLWFKEGELCKWDSALATWLRE</sequence>
<comment type="function">
    <text evidence="3">Major role in the synthesis of nucleoside triphosphates other than ATP. The ATP gamma phosphate is transferred to the NDP beta phosphate via a ping-pong mechanism, using a phosphorylated active-site intermediate. May activate MPK3 and MPK6. May be involved in the regulation of cellular redox state and hydrogen peroxide-mediated MAP kinase signaling.</text>
</comment>
<comment type="catalytic activity">
    <reaction>
        <text>a 2'-deoxyribonucleoside 5'-diphosphate + ATP = a 2'-deoxyribonucleoside 5'-triphosphate + ADP</text>
        <dbReference type="Rhea" id="RHEA:44640"/>
        <dbReference type="ChEBI" id="CHEBI:30616"/>
        <dbReference type="ChEBI" id="CHEBI:61560"/>
        <dbReference type="ChEBI" id="CHEBI:73316"/>
        <dbReference type="ChEBI" id="CHEBI:456216"/>
        <dbReference type="EC" id="2.7.4.6"/>
    </reaction>
</comment>
<comment type="catalytic activity">
    <reaction>
        <text>a ribonucleoside 5'-diphosphate + ATP = a ribonucleoside 5'-triphosphate + ADP</text>
        <dbReference type="Rhea" id="RHEA:18113"/>
        <dbReference type="ChEBI" id="CHEBI:30616"/>
        <dbReference type="ChEBI" id="CHEBI:57930"/>
        <dbReference type="ChEBI" id="CHEBI:61557"/>
        <dbReference type="ChEBI" id="CHEBI:456216"/>
        <dbReference type="EC" id="2.7.4.6"/>
    </reaction>
</comment>
<comment type="cofactor">
    <cofactor evidence="1">
        <name>Mg(2+)</name>
        <dbReference type="ChEBI" id="CHEBI:18420"/>
    </cofactor>
</comment>
<comment type="subunit">
    <text evidence="3 4">Interacts with PHYA, MPK3 and MPK6.</text>
</comment>
<comment type="interaction">
    <interactant intactId="EBI-349517">
        <id>O64903</id>
    </interactant>
    <interactant intactId="EBI-537551">
        <id>Q9LDI3</id>
        <label>CIPK24</label>
    </interactant>
    <organismsDiffer>false</organismsDiffer>
    <experiments>3</experiments>
</comment>
<comment type="interaction">
    <interactant intactId="EBI-349517">
        <id>O64903</id>
    </interactant>
    <interactant intactId="EBI-349526">
        <id>Q39023</id>
        <label>MPK3</label>
    </interactant>
    <organismsDiffer>false</organismsDiffer>
    <experiments>4</experiments>
</comment>
<comment type="interaction">
    <interactant intactId="EBI-349517">
        <id>O64903</id>
    </interactant>
    <interactant intactId="EBI-624446">
        <id>P14712</id>
        <label>PHYA</label>
    </interactant>
    <organismsDiffer>false</organismsDiffer>
    <experiments>3</experiments>
</comment>
<comment type="subcellular location">
    <subcellularLocation>
        <location evidence="5">Plastid</location>
        <location evidence="5">Chloroplast</location>
    </subcellularLocation>
</comment>
<comment type="induction">
    <text evidence="3">By hydrogen peroxide.</text>
</comment>
<comment type="PTM">
    <text evidence="3">Autophosphorylated.</text>
</comment>
<comment type="similarity">
    <text evidence="6">Belongs to the NDK family.</text>
</comment>
<name>NDK2_ARATH</name>
<dbReference type="EC" id="2.7.4.6"/>
<dbReference type="EMBL" id="AF017640">
    <property type="protein sequence ID" value="AAC15253.1"/>
    <property type="molecule type" value="mRNA"/>
</dbReference>
<dbReference type="EMBL" id="AJ012758">
    <property type="protein sequence ID" value="CAB58230.1"/>
    <property type="molecule type" value="mRNA"/>
</dbReference>
<dbReference type="EMBL" id="AB008265">
    <property type="protein sequence ID" value="BAB10573.1"/>
    <property type="molecule type" value="Genomic_DNA"/>
</dbReference>
<dbReference type="EMBL" id="AB023035">
    <property type="protein sequence ID" value="BAB10573.1"/>
    <property type="status" value="JOINED"/>
    <property type="molecule type" value="Genomic_DNA"/>
</dbReference>
<dbReference type="EMBL" id="CP002688">
    <property type="protein sequence ID" value="AED97731.1"/>
    <property type="molecule type" value="Genomic_DNA"/>
</dbReference>
<dbReference type="EMBL" id="AY057612">
    <property type="protein sequence ID" value="AAL14407.1"/>
    <property type="molecule type" value="mRNA"/>
</dbReference>
<dbReference type="EMBL" id="AY065291">
    <property type="protein sequence ID" value="AAL38767.1"/>
    <property type="molecule type" value="mRNA"/>
</dbReference>
<dbReference type="EMBL" id="AY117366">
    <property type="protein sequence ID" value="AAM51441.1"/>
    <property type="molecule type" value="mRNA"/>
</dbReference>
<dbReference type="EMBL" id="AF058391">
    <property type="protein sequence ID" value="AAC14280.1"/>
    <property type="molecule type" value="mRNA"/>
</dbReference>
<dbReference type="PIR" id="T51612">
    <property type="entry name" value="T51612"/>
</dbReference>
<dbReference type="PIR" id="T52586">
    <property type="entry name" value="T52586"/>
</dbReference>
<dbReference type="RefSeq" id="NP_568970.2">
    <property type="nucleotide sequence ID" value="NM_125726.4"/>
</dbReference>
<dbReference type="PDB" id="1S57">
    <property type="method" value="X-ray"/>
    <property type="resolution" value="1.80 A"/>
    <property type="chains" value="A/B/C/D/E/F=79-231"/>
</dbReference>
<dbReference type="PDB" id="1S59">
    <property type="method" value="X-ray"/>
    <property type="resolution" value="2.60 A"/>
    <property type="chains" value="A/B/C/D/E/F=79-231"/>
</dbReference>
<dbReference type="PDBsum" id="1S57"/>
<dbReference type="PDBsum" id="1S59"/>
<dbReference type="SMR" id="O64903"/>
<dbReference type="BioGRID" id="21694">
    <property type="interactions" value="21"/>
</dbReference>
<dbReference type="FunCoup" id="O64903">
    <property type="interactions" value="1315"/>
</dbReference>
<dbReference type="IntAct" id="O64903">
    <property type="interactions" value="14"/>
</dbReference>
<dbReference type="STRING" id="3702.O64903"/>
<dbReference type="iPTMnet" id="O64903"/>
<dbReference type="PaxDb" id="3702-AT5G63310.1"/>
<dbReference type="ProteomicsDB" id="251000"/>
<dbReference type="EnsemblPlants" id="AT5G63310.1">
    <property type="protein sequence ID" value="AT5G63310.1"/>
    <property type="gene ID" value="AT5G63310"/>
</dbReference>
<dbReference type="GeneID" id="836451"/>
<dbReference type="Gramene" id="AT5G63310.1">
    <property type="protein sequence ID" value="AT5G63310.1"/>
    <property type="gene ID" value="AT5G63310"/>
</dbReference>
<dbReference type="KEGG" id="ath:AT5G63310"/>
<dbReference type="Araport" id="AT5G63310"/>
<dbReference type="TAIR" id="AT5G63310">
    <property type="gene designation" value="NDPK2"/>
</dbReference>
<dbReference type="eggNOG" id="KOG0888">
    <property type="taxonomic scope" value="Eukaryota"/>
</dbReference>
<dbReference type="HOGENOM" id="CLU_060216_4_1_1"/>
<dbReference type="InParanoid" id="O64903"/>
<dbReference type="OMA" id="HEIGMWF"/>
<dbReference type="OrthoDB" id="2162449at2759"/>
<dbReference type="PhylomeDB" id="O64903"/>
<dbReference type="BioCyc" id="ARA:AT5G63310-MONOMER"/>
<dbReference type="BRENDA" id="2.7.4.6">
    <property type="organism ID" value="399"/>
</dbReference>
<dbReference type="EvolutionaryTrace" id="O64903"/>
<dbReference type="PRO" id="PR:O64903"/>
<dbReference type="Proteomes" id="UP000006548">
    <property type="component" value="Chromosome 5"/>
</dbReference>
<dbReference type="ExpressionAtlas" id="O64903">
    <property type="expression patterns" value="baseline and differential"/>
</dbReference>
<dbReference type="GO" id="GO:0009507">
    <property type="term" value="C:chloroplast"/>
    <property type="evidence" value="ECO:0007005"/>
    <property type="project" value="TAIR"/>
</dbReference>
<dbReference type="GO" id="GO:0009941">
    <property type="term" value="C:chloroplast envelope"/>
    <property type="evidence" value="ECO:0007005"/>
    <property type="project" value="TAIR"/>
</dbReference>
<dbReference type="GO" id="GO:0009570">
    <property type="term" value="C:chloroplast stroma"/>
    <property type="evidence" value="ECO:0007005"/>
    <property type="project" value="TAIR"/>
</dbReference>
<dbReference type="GO" id="GO:0005737">
    <property type="term" value="C:cytoplasm"/>
    <property type="evidence" value="ECO:0000314"/>
    <property type="project" value="TAIR"/>
</dbReference>
<dbReference type="GO" id="GO:0005634">
    <property type="term" value="C:nucleus"/>
    <property type="evidence" value="ECO:0000314"/>
    <property type="project" value="TAIR"/>
</dbReference>
<dbReference type="GO" id="GO:0009536">
    <property type="term" value="C:plastid"/>
    <property type="evidence" value="ECO:0007005"/>
    <property type="project" value="TAIR"/>
</dbReference>
<dbReference type="GO" id="GO:0009579">
    <property type="term" value="C:thylakoid"/>
    <property type="evidence" value="ECO:0007005"/>
    <property type="project" value="TAIR"/>
</dbReference>
<dbReference type="GO" id="GO:0005524">
    <property type="term" value="F:ATP binding"/>
    <property type="evidence" value="ECO:0007669"/>
    <property type="project" value="UniProtKB-KW"/>
</dbReference>
<dbReference type="GO" id="GO:0046872">
    <property type="term" value="F:metal ion binding"/>
    <property type="evidence" value="ECO:0007669"/>
    <property type="project" value="UniProtKB-KW"/>
</dbReference>
<dbReference type="GO" id="GO:0004550">
    <property type="term" value="F:nucleoside diphosphate kinase activity"/>
    <property type="evidence" value="ECO:0000314"/>
    <property type="project" value="TAIR"/>
</dbReference>
<dbReference type="GO" id="GO:0009734">
    <property type="term" value="P:auxin-activated signaling pathway"/>
    <property type="evidence" value="ECO:0000315"/>
    <property type="project" value="TAIR"/>
</dbReference>
<dbReference type="GO" id="GO:0006241">
    <property type="term" value="P:CTP biosynthetic process"/>
    <property type="evidence" value="ECO:0007669"/>
    <property type="project" value="InterPro"/>
</dbReference>
<dbReference type="GO" id="GO:0006183">
    <property type="term" value="P:GTP biosynthetic process"/>
    <property type="evidence" value="ECO:0007669"/>
    <property type="project" value="InterPro"/>
</dbReference>
<dbReference type="GO" id="GO:0009585">
    <property type="term" value="P:red, far-red light phototransduction"/>
    <property type="evidence" value="ECO:0000315"/>
    <property type="project" value="TAIR"/>
</dbReference>
<dbReference type="GO" id="GO:0042542">
    <property type="term" value="P:response to hydrogen peroxide"/>
    <property type="evidence" value="ECO:0000315"/>
    <property type="project" value="TAIR"/>
</dbReference>
<dbReference type="GO" id="GO:0009411">
    <property type="term" value="P:response to UV"/>
    <property type="evidence" value="ECO:0000304"/>
    <property type="project" value="TAIR"/>
</dbReference>
<dbReference type="GO" id="GO:0006228">
    <property type="term" value="P:UTP biosynthetic process"/>
    <property type="evidence" value="ECO:0007669"/>
    <property type="project" value="InterPro"/>
</dbReference>
<dbReference type="CDD" id="cd04413">
    <property type="entry name" value="NDPk_I"/>
    <property type="match status" value="1"/>
</dbReference>
<dbReference type="FunFam" id="3.30.70.141:FF:000002">
    <property type="entry name" value="Nucleoside diphosphate kinase"/>
    <property type="match status" value="1"/>
</dbReference>
<dbReference type="Gene3D" id="3.30.70.141">
    <property type="entry name" value="Nucleoside diphosphate kinase-like domain"/>
    <property type="match status" value="1"/>
</dbReference>
<dbReference type="HAMAP" id="MF_00451">
    <property type="entry name" value="NDP_kinase"/>
    <property type="match status" value="1"/>
</dbReference>
<dbReference type="InterPro" id="IPR034907">
    <property type="entry name" value="NDK-like_dom"/>
</dbReference>
<dbReference type="InterPro" id="IPR036850">
    <property type="entry name" value="NDK-like_dom_sf"/>
</dbReference>
<dbReference type="InterPro" id="IPR001564">
    <property type="entry name" value="Nucleoside_diP_kinase"/>
</dbReference>
<dbReference type="InterPro" id="IPR023005">
    <property type="entry name" value="Nucleoside_diP_kinase_AS"/>
</dbReference>
<dbReference type="NCBIfam" id="NF001908">
    <property type="entry name" value="PRK00668.1"/>
    <property type="match status" value="1"/>
</dbReference>
<dbReference type="PANTHER" id="PTHR11349">
    <property type="entry name" value="NUCLEOSIDE DIPHOSPHATE KINASE"/>
    <property type="match status" value="1"/>
</dbReference>
<dbReference type="Pfam" id="PF00334">
    <property type="entry name" value="NDK"/>
    <property type="match status" value="1"/>
</dbReference>
<dbReference type="PRINTS" id="PR01243">
    <property type="entry name" value="NUCDPKINASE"/>
</dbReference>
<dbReference type="SMART" id="SM00562">
    <property type="entry name" value="NDK"/>
    <property type="match status" value="1"/>
</dbReference>
<dbReference type="SUPFAM" id="SSF54919">
    <property type="entry name" value="Nucleoside diphosphate kinase, NDK"/>
    <property type="match status" value="1"/>
</dbReference>
<dbReference type="PROSITE" id="PS00469">
    <property type="entry name" value="NDPK"/>
    <property type="match status" value="1"/>
</dbReference>
<dbReference type="PROSITE" id="PS51374">
    <property type="entry name" value="NDPK_LIKE"/>
    <property type="match status" value="1"/>
</dbReference>
<protein>
    <recommendedName>
        <fullName>Nucleoside diphosphate kinase II, chloroplastic</fullName>
        <shortName>NDK II</shortName>
        <shortName>NDP kinase II</shortName>
        <shortName>NDPK II</shortName>
        <shortName>NDPK Ia</shortName>
        <ecNumber>2.7.4.6</ecNumber>
    </recommendedName>
</protein>
<feature type="transit peptide" description="Chloroplast" evidence="2">
    <location>
        <begin position="1"/>
        <end position="62"/>
    </location>
</feature>
<feature type="chain" id="PRO_0000019434" description="Nucleoside diphosphate kinase II, chloroplastic">
    <location>
        <begin position="63"/>
        <end position="231"/>
    </location>
</feature>
<feature type="active site" description="Pros-phosphohistidine intermediate" evidence="1">
    <location>
        <position position="197"/>
    </location>
</feature>
<feature type="binding site">
    <location>
        <position position="91"/>
    </location>
    <ligand>
        <name>ATP</name>
        <dbReference type="ChEBI" id="CHEBI:30616"/>
    </ligand>
</feature>
<feature type="binding site">
    <location>
        <position position="139"/>
    </location>
    <ligand>
        <name>ATP</name>
        <dbReference type="ChEBI" id="CHEBI:30616"/>
    </ligand>
</feature>
<feature type="binding site">
    <location>
        <position position="167"/>
    </location>
    <ligand>
        <name>ATP</name>
        <dbReference type="ChEBI" id="CHEBI:30616"/>
    </ligand>
</feature>
<feature type="binding site">
    <location>
        <position position="173"/>
    </location>
    <ligand>
        <name>ATP</name>
        <dbReference type="ChEBI" id="CHEBI:30616"/>
    </ligand>
</feature>
<feature type="binding site">
    <location>
        <position position="184"/>
    </location>
    <ligand>
        <name>ATP</name>
        <dbReference type="ChEBI" id="CHEBI:30616"/>
    </ligand>
</feature>
<feature type="binding site">
    <location>
        <position position="194"/>
    </location>
    <ligand>
        <name>ATP</name>
        <dbReference type="ChEBI" id="CHEBI:30616"/>
    </ligand>
</feature>
<feature type="sequence conflict" description="In Ref. 1; AAC15253." evidence="6" ref="1">
    <original>D</original>
    <variation>E</variation>
    <location>
        <position position="133"/>
    </location>
</feature>
<feature type="sequence conflict" description="In Ref. 1; AAC15253." evidence="6" ref="1">
    <original>PN</original>
    <variation>LT</variation>
    <location>
        <begin position="141"/>
        <end position="142"/>
    </location>
</feature>
<feature type="strand" evidence="7">
    <location>
        <begin position="84"/>
        <end position="90"/>
    </location>
</feature>
<feature type="helix" evidence="7">
    <location>
        <begin position="92"/>
        <end position="96"/>
    </location>
</feature>
<feature type="helix" evidence="7">
    <location>
        <begin position="100"/>
        <end position="110"/>
    </location>
</feature>
<feature type="strand" evidence="7">
    <location>
        <begin position="113"/>
        <end position="120"/>
    </location>
</feature>
<feature type="helix" evidence="7">
    <location>
        <begin position="124"/>
        <end position="130"/>
    </location>
</feature>
<feature type="helix" evidence="7">
    <location>
        <begin position="132"/>
        <end position="134"/>
    </location>
</feature>
<feature type="strand" evidence="7">
    <location>
        <begin position="137"/>
        <end position="139"/>
    </location>
</feature>
<feature type="helix" evidence="7">
    <location>
        <begin position="140"/>
        <end position="147"/>
    </location>
</feature>
<feature type="strand" evidence="7">
    <location>
        <begin position="152"/>
        <end position="159"/>
    </location>
</feature>
<feature type="helix" evidence="7">
    <location>
        <begin position="162"/>
        <end position="170"/>
    </location>
</feature>
<feature type="turn" evidence="7">
    <location>
        <begin position="175"/>
        <end position="177"/>
    </location>
</feature>
<feature type="helix" evidence="7">
    <location>
        <begin position="183"/>
        <end position="187"/>
    </location>
</feature>
<feature type="helix" evidence="8">
    <location>
        <begin position="191"/>
        <end position="193"/>
    </location>
</feature>
<feature type="strand" evidence="7">
    <location>
        <begin position="196"/>
        <end position="198"/>
    </location>
</feature>
<feature type="helix" evidence="7">
    <location>
        <begin position="202"/>
        <end position="212"/>
    </location>
</feature>
<feature type="helix" evidence="7">
    <location>
        <begin position="226"/>
        <end position="229"/>
    </location>
</feature>
<keyword id="KW-0002">3D-structure</keyword>
<keyword id="KW-0067">ATP-binding</keyword>
<keyword id="KW-0150">Chloroplast</keyword>
<keyword id="KW-0418">Kinase</keyword>
<keyword id="KW-0460">Magnesium</keyword>
<keyword id="KW-0479">Metal-binding</keyword>
<keyword id="KW-0546">Nucleotide metabolism</keyword>
<keyword id="KW-0547">Nucleotide-binding</keyword>
<keyword id="KW-0597">Phosphoprotein</keyword>
<keyword id="KW-0934">Plastid</keyword>
<keyword id="KW-1185">Reference proteome</keyword>
<keyword id="KW-0808">Transferase</keyword>
<keyword id="KW-0809">Transit peptide</keyword>
<reference key="1">
    <citation type="online journal article" date="1998" name="Plant Gene Register">
        <title>Cloning and characterization of nucleoside diphosphate kinase 2 from Arabidopsis thaliana.</title>
        <authorList>
            <person name="Yi H."/>
            <person name="Song P.-S."/>
            <person name="Choi G."/>
        </authorList>
        <locator>PGR98-056</locator>
    </citation>
    <scope>NUCLEOTIDE SEQUENCE [MRNA]</scope>
    <source>
        <strain>cv. Columbia</strain>
    </source>
</reference>
<reference key="2">
    <citation type="journal article" date="1999" name="J. Biol. Chem.">
        <title>UV responsive genes of Arabidopsis revealed by similarity to the Gcn4 mediated UV response in yeast.</title>
        <authorList>
            <person name="Zimmermann S."/>
            <person name="Baumann A."/>
            <person name="Jaekel K."/>
            <person name="Marbach I."/>
            <person name="Engelberg D."/>
            <person name="Frohnmeyer H."/>
        </authorList>
    </citation>
    <scope>NUCLEOTIDE SEQUENCE [MRNA]</scope>
    <source>
        <strain>cv. Landsberg erecta</strain>
    </source>
</reference>
<reference key="3">
    <citation type="journal article" date="1997" name="DNA Res.">
        <title>Structural analysis of Arabidopsis thaliana chromosome 5. III. Sequence features of the regions of 1,191,918 bp covered by seventeen physically assigned P1 clones.</title>
        <authorList>
            <person name="Nakamura Y."/>
            <person name="Sato S."/>
            <person name="Kaneko T."/>
            <person name="Kotani H."/>
            <person name="Asamizu E."/>
            <person name="Miyajima N."/>
            <person name="Tabata S."/>
        </authorList>
    </citation>
    <scope>NUCLEOTIDE SEQUENCE [LARGE SCALE GENOMIC DNA]</scope>
    <source>
        <strain>cv. Columbia</strain>
    </source>
</reference>
<reference key="4">
    <citation type="journal article" date="2000" name="DNA Res.">
        <title>Structural analysis of Arabidopsis thaliana chromosome 5. X. Sequence features of the regions of 3,076,755 bp covered by sixty P1 and TAC clones.</title>
        <authorList>
            <person name="Sato S."/>
            <person name="Nakamura Y."/>
            <person name="Kaneko T."/>
            <person name="Katoh T."/>
            <person name="Asamizu E."/>
            <person name="Kotani H."/>
            <person name="Tabata S."/>
        </authorList>
    </citation>
    <scope>NUCLEOTIDE SEQUENCE [LARGE SCALE GENOMIC DNA]</scope>
    <source>
        <strain>cv. Columbia</strain>
    </source>
</reference>
<reference key="5">
    <citation type="journal article" date="2017" name="Plant J.">
        <title>Araport11: a complete reannotation of the Arabidopsis thaliana reference genome.</title>
        <authorList>
            <person name="Cheng C.Y."/>
            <person name="Krishnakumar V."/>
            <person name="Chan A.P."/>
            <person name="Thibaud-Nissen F."/>
            <person name="Schobel S."/>
            <person name="Town C.D."/>
        </authorList>
    </citation>
    <scope>GENOME REANNOTATION</scope>
    <source>
        <strain>cv. Columbia</strain>
    </source>
</reference>
<reference key="6">
    <citation type="journal article" date="2003" name="Science">
        <title>Empirical analysis of transcriptional activity in the Arabidopsis genome.</title>
        <authorList>
            <person name="Yamada K."/>
            <person name="Lim J."/>
            <person name="Dale J.M."/>
            <person name="Chen H."/>
            <person name="Shinn P."/>
            <person name="Palm C.J."/>
            <person name="Southwick A.M."/>
            <person name="Wu H.C."/>
            <person name="Kim C.J."/>
            <person name="Nguyen M."/>
            <person name="Pham P.K."/>
            <person name="Cheuk R.F."/>
            <person name="Karlin-Newmann G."/>
            <person name="Liu S.X."/>
            <person name="Lam B."/>
            <person name="Sakano H."/>
            <person name="Wu T."/>
            <person name="Yu G."/>
            <person name="Miranda M."/>
            <person name="Quach H.L."/>
            <person name="Tripp M."/>
            <person name="Chang C.H."/>
            <person name="Lee J.M."/>
            <person name="Toriumi M.J."/>
            <person name="Chan M.M."/>
            <person name="Tang C.C."/>
            <person name="Onodera C.S."/>
            <person name="Deng J.M."/>
            <person name="Akiyama K."/>
            <person name="Ansari Y."/>
            <person name="Arakawa T."/>
            <person name="Banh J."/>
            <person name="Banno F."/>
            <person name="Bowser L."/>
            <person name="Brooks S.Y."/>
            <person name="Carninci P."/>
            <person name="Chao Q."/>
            <person name="Choy N."/>
            <person name="Enju A."/>
            <person name="Goldsmith A.D."/>
            <person name="Gurjal M."/>
            <person name="Hansen N.F."/>
            <person name="Hayashizaki Y."/>
            <person name="Johnson-Hopson C."/>
            <person name="Hsuan V.W."/>
            <person name="Iida K."/>
            <person name="Karnes M."/>
            <person name="Khan S."/>
            <person name="Koesema E."/>
            <person name="Ishida J."/>
            <person name="Jiang P.X."/>
            <person name="Jones T."/>
            <person name="Kawai J."/>
            <person name="Kamiya A."/>
            <person name="Meyers C."/>
            <person name="Nakajima M."/>
            <person name="Narusaka M."/>
            <person name="Seki M."/>
            <person name="Sakurai T."/>
            <person name="Satou M."/>
            <person name="Tamse R."/>
            <person name="Vaysberg M."/>
            <person name="Wallender E.K."/>
            <person name="Wong C."/>
            <person name="Yamamura Y."/>
            <person name="Yuan S."/>
            <person name="Shinozaki K."/>
            <person name="Davis R.W."/>
            <person name="Theologis A."/>
            <person name="Ecker J.R."/>
        </authorList>
    </citation>
    <scope>NUCLEOTIDE SEQUENCE [LARGE SCALE MRNA]</scope>
    <source>
        <strain>cv. Columbia</strain>
    </source>
</reference>
<reference key="7">
    <citation type="journal article" date="2003" name="Proc. Natl. Acad. Sci. U.S.A.">
        <title>NDP kinase 2 interacts with two oxidative stress-activated MAPKs to regulate cellular redox state and enhances multiple stress tolerance in transgenic plants.</title>
        <authorList>
            <person name="Moon H."/>
            <person name="Lee B."/>
            <person name="Choi G."/>
            <person name="Shin D."/>
            <person name="Prasad D.T."/>
            <person name="Lee O."/>
            <person name="Kwak S.-S."/>
            <person name="Kim D.H."/>
            <person name="Nam J."/>
            <person name="Bahk J."/>
            <person name="Hong J.C."/>
            <person name="Lee S.Y."/>
            <person name="Cho M.J."/>
            <person name="Lim C.O."/>
            <person name="Yun D.-J."/>
        </authorList>
    </citation>
    <scope>FUNCTION</scope>
    <scope>INDUCTION</scope>
    <scope>PHOSPHORYLATION</scope>
    <scope>INTERACTION WITH MPK3 AND MPK6</scope>
</reference>
<reference key="8">
    <citation type="journal article" date="2008" name="PLoS ONE">
        <title>Sorting signals, N-terminal modifications and abundance of the chloroplast proteome.</title>
        <authorList>
            <person name="Zybailov B."/>
            <person name="Rutschow H."/>
            <person name="Friso G."/>
            <person name="Rudella A."/>
            <person name="Emanuelsson O."/>
            <person name="Sun Q."/>
            <person name="van Wijk K.J."/>
        </authorList>
    </citation>
    <scope>IDENTIFICATION BY MASS SPECTROMETRY</scope>
    <scope>SUBCELLULAR LOCATION [LARGE SCALE ANALYSIS]</scope>
</reference>
<reference key="9">
    <citation type="journal article" date="2004" name="J. Mol. Biol.">
        <title>Structural analysis of Arabidopsis thaliana nucleoside diphosphate kinase-2 for phytochrome-mediated light signaling.</title>
        <authorList>
            <person name="Im Y.J."/>
            <person name="Kim J.I."/>
            <person name="Shen Y."/>
            <person name="Na Y."/>
            <person name="Han Y.J."/>
            <person name="Kim S.H."/>
            <person name="Song P.S."/>
            <person name="Eom S.H."/>
        </authorList>
    </citation>
    <scope>X-RAY CRYSTALLOGRAPHY (1.8 ANGSTROMS) OF 79-231 IN COMPLEX WITH ATP ANALOG</scope>
    <scope>INTERACTION WITH PHYA</scope>
</reference>